<feature type="chain" id="PRO_1000022996" description="Shikimate kinase">
    <location>
        <begin position="1"/>
        <end position="171"/>
    </location>
</feature>
<feature type="binding site" evidence="1">
    <location>
        <begin position="14"/>
        <end position="19"/>
    </location>
    <ligand>
        <name>ATP</name>
        <dbReference type="ChEBI" id="CHEBI:30616"/>
    </ligand>
</feature>
<feature type="binding site" evidence="1">
    <location>
        <position position="18"/>
    </location>
    <ligand>
        <name>Mg(2+)</name>
        <dbReference type="ChEBI" id="CHEBI:18420"/>
    </ligand>
</feature>
<feature type="binding site" evidence="1">
    <location>
        <position position="36"/>
    </location>
    <ligand>
        <name>substrate</name>
    </ligand>
</feature>
<feature type="binding site" evidence="1">
    <location>
        <position position="60"/>
    </location>
    <ligand>
        <name>substrate</name>
    </ligand>
</feature>
<feature type="binding site" evidence="1">
    <location>
        <position position="82"/>
    </location>
    <ligand>
        <name>substrate</name>
    </ligand>
</feature>
<feature type="binding site" evidence="1">
    <location>
        <position position="120"/>
    </location>
    <ligand>
        <name>ATP</name>
        <dbReference type="ChEBI" id="CHEBI:30616"/>
    </ligand>
</feature>
<feature type="binding site" evidence="1">
    <location>
        <position position="139"/>
    </location>
    <ligand>
        <name>substrate</name>
    </ligand>
</feature>
<feature type="binding site" evidence="1">
    <location>
        <position position="156"/>
    </location>
    <ligand>
        <name>ATP</name>
        <dbReference type="ChEBI" id="CHEBI:30616"/>
    </ligand>
</feature>
<organism>
    <name type="scientific">Shewanella frigidimarina (strain NCIMB 400)</name>
    <dbReference type="NCBI Taxonomy" id="318167"/>
    <lineage>
        <taxon>Bacteria</taxon>
        <taxon>Pseudomonadati</taxon>
        <taxon>Pseudomonadota</taxon>
        <taxon>Gammaproteobacteria</taxon>
        <taxon>Alteromonadales</taxon>
        <taxon>Shewanellaceae</taxon>
        <taxon>Shewanella</taxon>
    </lineage>
</organism>
<sequence length="171" mass="19225">MAEKRNIFLVGPMGAGKSTIGRHLAQMLHLDFHDSDHEIEQRTGADIAWVFDVEGEEGFRRREAQVIGDLSERQGIVLATGGGSVQSKDIRNYLSARGIVVYLETTIDKQVARTQRDKRRPLLQVDDPREVLESLAEIRNPLYEEIADVIVKTDEQSAKIVANQIIEQLGF</sequence>
<accession>Q088S7</accession>
<protein>
    <recommendedName>
        <fullName evidence="1">Shikimate kinase</fullName>
        <shortName evidence="1">SK</shortName>
        <ecNumber evidence="1">2.7.1.71</ecNumber>
    </recommendedName>
</protein>
<name>AROK_SHEFN</name>
<keyword id="KW-0028">Amino-acid biosynthesis</keyword>
<keyword id="KW-0057">Aromatic amino acid biosynthesis</keyword>
<keyword id="KW-0067">ATP-binding</keyword>
<keyword id="KW-0963">Cytoplasm</keyword>
<keyword id="KW-0418">Kinase</keyword>
<keyword id="KW-0460">Magnesium</keyword>
<keyword id="KW-0479">Metal-binding</keyword>
<keyword id="KW-0547">Nucleotide-binding</keyword>
<keyword id="KW-1185">Reference proteome</keyword>
<keyword id="KW-0808">Transferase</keyword>
<reference key="1">
    <citation type="submission" date="2006-08" db="EMBL/GenBank/DDBJ databases">
        <title>Complete sequence of Shewanella frigidimarina NCIMB 400.</title>
        <authorList>
            <consortium name="US DOE Joint Genome Institute"/>
            <person name="Copeland A."/>
            <person name="Lucas S."/>
            <person name="Lapidus A."/>
            <person name="Barry K."/>
            <person name="Detter J.C."/>
            <person name="Glavina del Rio T."/>
            <person name="Hammon N."/>
            <person name="Israni S."/>
            <person name="Dalin E."/>
            <person name="Tice H."/>
            <person name="Pitluck S."/>
            <person name="Fredrickson J.K."/>
            <person name="Kolker E."/>
            <person name="McCuel L.A."/>
            <person name="DiChristina T."/>
            <person name="Nealson K.H."/>
            <person name="Newman D."/>
            <person name="Tiedje J.M."/>
            <person name="Zhou J."/>
            <person name="Romine M.F."/>
            <person name="Culley D.E."/>
            <person name="Serres M."/>
            <person name="Chertkov O."/>
            <person name="Brettin T."/>
            <person name="Bruce D."/>
            <person name="Han C."/>
            <person name="Tapia R."/>
            <person name="Gilna P."/>
            <person name="Schmutz J."/>
            <person name="Larimer F."/>
            <person name="Land M."/>
            <person name="Hauser L."/>
            <person name="Kyrpides N."/>
            <person name="Mikhailova N."/>
            <person name="Richardson P."/>
        </authorList>
    </citation>
    <scope>NUCLEOTIDE SEQUENCE [LARGE SCALE GENOMIC DNA]</scope>
    <source>
        <strain>NCIMB 400</strain>
    </source>
</reference>
<dbReference type="EC" id="2.7.1.71" evidence="1"/>
<dbReference type="EMBL" id="CP000447">
    <property type="protein sequence ID" value="ABI70238.1"/>
    <property type="molecule type" value="Genomic_DNA"/>
</dbReference>
<dbReference type="RefSeq" id="WP_011635865.1">
    <property type="nucleotide sequence ID" value="NC_008345.1"/>
</dbReference>
<dbReference type="SMR" id="Q088S7"/>
<dbReference type="STRING" id="318167.Sfri_0375"/>
<dbReference type="GeneID" id="90570650"/>
<dbReference type="KEGG" id="sfr:Sfri_0375"/>
<dbReference type="eggNOG" id="COG0703">
    <property type="taxonomic scope" value="Bacteria"/>
</dbReference>
<dbReference type="HOGENOM" id="CLU_057607_2_2_6"/>
<dbReference type="OrthoDB" id="9800332at2"/>
<dbReference type="UniPathway" id="UPA00053">
    <property type="reaction ID" value="UER00088"/>
</dbReference>
<dbReference type="Proteomes" id="UP000000684">
    <property type="component" value="Chromosome"/>
</dbReference>
<dbReference type="GO" id="GO:0005829">
    <property type="term" value="C:cytosol"/>
    <property type="evidence" value="ECO:0007669"/>
    <property type="project" value="TreeGrafter"/>
</dbReference>
<dbReference type="GO" id="GO:0005524">
    <property type="term" value="F:ATP binding"/>
    <property type="evidence" value="ECO:0007669"/>
    <property type="project" value="UniProtKB-UniRule"/>
</dbReference>
<dbReference type="GO" id="GO:0000287">
    <property type="term" value="F:magnesium ion binding"/>
    <property type="evidence" value="ECO:0007669"/>
    <property type="project" value="UniProtKB-UniRule"/>
</dbReference>
<dbReference type="GO" id="GO:0004765">
    <property type="term" value="F:shikimate kinase activity"/>
    <property type="evidence" value="ECO:0007669"/>
    <property type="project" value="UniProtKB-UniRule"/>
</dbReference>
<dbReference type="GO" id="GO:0008652">
    <property type="term" value="P:amino acid biosynthetic process"/>
    <property type="evidence" value="ECO:0007669"/>
    <property type="project" value="UniProtKB-KW"/>
</dbReference>
<dbReference type="GO" id="GO:0009073">
    <property type="term" value="P:aromatic amino acid family biosynthetic process"/>
    <property type="evidence" value="ECO:0007669"/>
    <property type="project" value="UniProtKB-KW"/>
</dbReference>
<dbReference type="GO" id="GO:0009423">
    <property type="term" value="P:chorismate biosynthetic process"/>
    <property type="evidence" value="ECO:0007669"/>
    <property type="project" value="UniProtKB-UniRule"/>
</dbReference>
<dbReference type="CDD" id="cd00464">
    <property type="entry name" value="SK"/>
    <property type="match status" value="1"/>
</dbReference>
<dbReference type="FunFam" id="3.40.50.300:FF:000099">
    <property type="entry name" value="Shikimate kinase 1"/>
    <property type="match status" value="1"/>
</dbReference>
<dbReference type="Gene3D" id="3.40.50.300">
    <property type="entry name" value="P-loop containing nucleotide triphosphate hydrolases"/>
    <property type="match status" value="1"/>
</dbReference>
<dbReference type="HAMAP" id="MF_00109">
    <property type="entry name" value="Shikimate_kinase"/>
    <property type="match status" value="1"/>
</dbReference>
<dbReference type="InterPro" id="IPR027417">
    <property type="entry name" value="P-loop_NTPase"/>
</dbReference>
<dbReference type="InterPro" id="IPR031322">
    <property type="entry name" value="Shikimate/glucono_kinase"/>
</dbReference>
<dbReference type="InterPro" id="IPR000623">
    <property type="entry name" value="Shikimate_kinase/TSH1"/>
</dbReference>
<dbReference type="InterPro" id="IPR023000">
    <property type="entry name" value="Shikimate_kinase_CS"/>
</dbReference>
<dbReference type="NCBIfam" id="NF003456">
    <property type="entry name" value="PRK05057.1"/>
    <property type="match status" value="1"/>
</dbReference>
<dbReference type="PANTHER" id="PTHR21087">
    <property type="entry name" value="SHIKIMATE KINASE"/>
    <property type="match status" value="1"/>
</dbReference>
<dbReference type="PANTHER" id="PTHR21087:SF16">
    <property type="entry name" value="SHIKIMATE KINASE 1, CHLOROPLASTIC"/>
    <property type="match status" value="1"/>
</dbReference>
<dbReference type="Pfam" id="PF01202">
    <property type="entry name" value="SKI"/>
    <property type="match status" value="1"/>
</dbReference>
<dbReference type="PRINTS" id="PR01100">
    <property type="entry name" value="SHIKIMTKNASE"/>
</dbReference>
<dbReference type="SUPFAM" id="SSF52540">
    <property type="entry name" value="P-loop containing nucleoside triphosphate hydrolases"/>
    <property type="match status" value="1"/>
</dbReference>
<dbReference type="PROSITE" id="PS01128">
    <property type="entry name" value="SHIKIMATE_KINASE"/>
    <property type="match status" value="1"/>
</dbReference>
<comment type="function">
    <text evidence="1">Catalyzes the specific phosphorylation of the 3-hydroxyl group of shikimic acid using ATP as a cosubstrate.</text>
</comment>
<comment type="catalytic activity">
    <reaction evidence="1">
        <text>shikimate + ATP = 3-phosphoshikimate + ADP + H(+)</text>
        <dbReference type="Rhea" id="RHEA:13121"/>
        <dbReference type="ChEBI" id="CHEBI:15378"/>
        <dbReference type="ChEBI" id="CHEBI:30616"/>
        <dbReference type="ChEBI" id="CHEBI:36208"/>
        <dbReference type="ChEBI" id="CHEBI:145989"/>
        <dbReference type="ChEBI" id="CHEBI:456216"/>
        <dbReference type="EC" id="2.7.1.71"/>
    </reaction>
</comment>
<comment type="cofactor">
    <cofactor evidence="1">
        <name>Mg(2+)</name>
        <dbReference type="ChEBI" id="CHEBI:18420"/>
    </cofactor>
    <text evidence="1">Binds 1 Mg(2+) ion per subunit.</text>
</comment>
<comment type="pathway">
    <text evidence="1">Metabolic intermediate biosynthesis; chorismate biosynthesis; chorismate from D-erythrose 4-phosphate and phosphoenolpyruvate: step 5/7.</text>
</comment>
<comment type="subunit">
    <text evidence="1">Monomer.</text>
</comment>
<comment type="subcellular location">
    <subcellularLocation>
        <location evidence="1">Cytoplasm</location>
    </subcellularLocation>
</comment>
<comment type="similarity">
    <text evidence="1">Belongs to the shikimate kinase family.</text>
</comment>
<evidence type="ECO:0000255" key="1">
    <source>
        <dbReference type="HAMAP-Rule" id="MF_00109"/>
    </source>
</evidence>
<gene>
    <name evidence="1" type="primary">aroK</name>
    <name type="ordered locus">Sfri_0375</name>
</gene>
<proteinExistence type="inferred from homology"/>